<evidence type="ECO:0000255" key="1"/>
<evidence type="ECO:0000269" key="2">
    <source>
    </source>
</evidence>
<evidence type="ECO:0000269" key="3">
    <source>
    </source>
</evidence>
<evidence type="ECO:0000269" key="4">
    <source>
    </source>
</evidence>
<evidence type="ECO:0000269" key="5">
    <source>
    </source>
</evidence>
<evidence type="ECO:0000269" key="6">
    <source>
    </source>
</evidence>
<evidence type="ECO:0000269" key="7">
    <source>
    </source>
</evidence>
<evidence type="ECO:0000269" key="8">
    <source>
    </source>
</evidence>
<evidence type="ECO:0000269" key="9">
    <source>
    </source>
</evidence>
<proteinExistence type="evidence at protein level"/>
<dbReference type="EMBL" id="CP017630">
    <property type="protein sequence ID" value="AOW31531.1"/>
    <property type="molecule type" value="Genomic_DNA"/>
</dbReference>
<dbReference type="RefSeq" id="XP_716258.1">
    <property type="nucleotide sequence ID" value="XM_711165.1"/>
</dbReference>
<dbReference type="STRING" id="237561.Q5A343"/>
<dbReference type="GlyCosmos" id="Q5A343">
    <property type="glycosylation" value="1 site, No reported glycans"/>
</dbReference>
<dbReference type="EnsemblFungi" id="CR_08510W_A-T">
    <property type="protein sequence ID" value="CR_08510W_A-T-p1"/>
    <property type="gene ID" value="CR_08510W_A"/>
</dbReference>
<dbReference type="GeneID" id="3642138"/>
<dbReference type="KEGG" id="cal:CAALFM_CR08510WA"/>
<dbReference type="CGD" id="CAL0000178196">
    <property type="gene designation" value="PGA13"/>
</dbReference>
<dbReference type="VEuPathDB" id="FungiDB:CR_08510W_A"/>
<dbReference type="HOGENOM" id="CLU_599905_0_0_1"/>
<dbReference type="InParanoid" id="Q5A343"/>
<dbReference type="OMA" id="CHPTTIE"/>
<dbReference type="OrthoDB" id="4025926at2759"/>
<dbReference type="PRO" id="PR:Q5A343"/>
<dbReference type="Proteomes" id="UP000000559">
    <property type="component" value="Chromosome R"/>
</dbReference>
<dbReference type="GO" id="GO:0005576">
    <property type="term" value="C:extracellular region"/>
    <property type="evidence" value="ECO:0007669"/>
    <property type="project" value="UniProtKB-KW"/>
</dbReference>
<dbReference type="GO" id="GO:0009277">
    <property type="term" value="C:fungal-type cell wall"/>
    <property type="evidence" value="ECO:0000314"/>
    <property type="project" value="CGD"/>
</dbReference>
<dbReference type="GO" id="GO:0098552">
    <property type="term" value="C:side of membrane"/>
    <property type="evidence" value="ECO:0007669"/>
    <property type="project" value="UniProtKB-KW"/>
</dbReference>
<dbReference type="GO" id="GO:0030447">
    <property type="term" value="P:filamentous growth"/>
    <property type="evidence" value="ECO:0000315"/>
    <property type="project" value="CGD"/>
</dbReference>
<dbReference type="GO" id="GO:0044182">
    <property type="term" value="P:filamentous growth of a population of unicellular organisms"/>
    <property type="evidence" value="ECO:0000315"/>
    <property type="project" value="CGD"/>
</dbReference>
<dbReference type="GO" id="GO:0031505">
    <property type="term" value="P:fungal-type cell wall organization"/>
    <property type="evidence" value="ECO:0000315"/>
    <property type="project" value="CGD"/>
</dbReference>
<dbReference type="GO" id="GO:0060257">
    <property type="term" value="P:negative regulation of flocculation"/>
    <property type="evidence" value="ECO:0000315"/>
    <property type="project" value="CGD"/>
</dbReference>
<sequence length="456" mass="46501">MRSPSLAVAATTVLGLFSSSALAYYGNTTTVALTTTEFVTTCPYPTTFTVSTCTNDVCQPTVVTVTEETTITIPGTVVCPVVSTPSGSASASASAGASSEEEGSVVTTQVTVTDFTTYCPYPTTLTITKCENNECHPTTIPVETATTVTVTGEVICPTTTSTSPKESSSEAASSEVITTQVTVTDYTTYCPLPTTIVVSTCDEEKCHPTTIEVSTPTTVVVPGTVVCPTTSVATPSQSEVATKPTTINSVVTTGVTTTDYTTYCPSPTTIVVSTCDEEKCHPTTIEVSTPTTVVVPGTVVHPSTSATIITTTAEQPPASPEVSTIESVVTTPATLTGYTTYCPEPTTIVLTTCSDDQCKPHTVSATGGETVSIPATIVVPSSHTTQVEITVSSASVPASEKPTTPVTVAAVSSSPAVSTETPSLVTPAISIAGAAAVNVVPTTAFGLFAIILASIF</sequence>
<keyword id="KW-0134">Cell wall</keyword>
<keyword id="KW-0961">Cell wall biogenesis/degradation</keyword>
<keyword id="KW-0325">Glycoprotein</keyword>
<keyword id="KW-0336">GPI-anchor</keyword>
<keyword id="KW-0449">Lipoprotein</keyword>
<keyword id="KW-0472">Membrane</keyword>
<keyword id="KW-1185">Reference proteome</keyword>
<keyword id="KW-0964">Secreted</keyword>
<keyword id="KW-0732">Signal</keyword>
<keyword id="KW-0843">Virulence</keyword>
<feature type="signal peptide" evidence="1">
    <location>
        <begin position="1"/>
        <end position="23"/>
    </location>
</feature>
<feature type="chain" id="PRO_0000424654" description="GPI-anchored protein 13">
    <location>
        <begin position="24"/>
        <end position="433"/>
    </location>
</feature>
<feature type="propeptide" id="PRO_0000424655" description="Removed in mature form" evidence="1">
    <location>
        <begin position="434"/>
        <end position="456"/>
    </location>
</feature>
<feature type="lipid moiety-binding region" description="GPI-anchor amidated glycine" evidence="1">
    <location>
        <position position="433"/>
    </location>
</feature>
<feature type="glycosylation site" description="N-linked (GlcNAc...) asparagine" evidence="1">
    <location>
        <position position="27"/>
    </location>
</feature>
<comment type="function">
    <text evidence="7">Cell wall protein which contributes to cell wall synthesis and is important for acquiring normal surface properties. Required for virulence in a mouse infection model.</text>
</comment>
<comment type="subcellular location">
    <subcellularLocation>
        <location evidence="7">Secreted</location>
        <location evidence="7">Cell wall</location>
    </subcellularLocation>
    <subcellularLocation>
        <location evidence="7">Membrane</location>
        <topology evidence="7">Lipid-anchor</topology>
        <topology evidence="7">GPI-anchor</topology>
    </subcellularLocation>
    <text>Covalently-linked GPI-modified cell wall protein (GPI-CWP).</text>
</comment>
<comment type="induction">
    <text evidence="2 3 4 5 6 8 9">Induced by caspofungin, tunicamycin, during chlamydospore formation and during cell wall regeneration following protoplasting. Repressed by NRG1 and TUP1. Also regulated by TSA1.</text>
</comment>
<comment type="PTM">
    <text>The GPI-anchor is attached to the protein in the endoplasmic reticulum and serves to target the protein to the cell surface. There, the glucosamine-inositol phospholipid moiety is cleaved off and the GPI-modified mannoprotein is covalently attached via its lipidless GPI glycan remnant to the 1,6-beta-glucan of the outer cell wall layer.</text>
</comment>
<comment type="disruption phenotype">
    <text evidence="7">leads to increased sensitivity to Congo red, Calcofluor white, and zymolyase, delayed filamentation, a higher surface hydrophobicity, increased adherence and flocculation; as well as to a diminished ability of protoplasts to recover their cell wall.</text>
</comment>
<reference key="1">
    <citation type="journal article" date="2004" name="Proc. Natl. Acad. Sci. U.S.A.">
        <title>The diploid genome sequence of Candida albicans.</title>
        <authorList>
            <person name="Jones T."/>
            <person name="Federspiel N.A."/>
            <person name="Chibana H."/>
            <person name="Dungan J."/>
            <person name="Kalman S."/>
            <person name="Magee B.B."/>
            <person name="Newport G."/>
            <person name="Thorstenson Y.R."/>
            <person name="Agabian N."/>
            <person name="Magee P.T."/>
            <person name="Davis R.W."/>
            <person name="Scherer S."/>
        </authorList>
    </citation>
    <scope>NUCLEOTIDE SEQUENCE [LARGE SCALE GENOMIC DNA]</scope>
    <source>
        <strain>SC5314 / ATCC MYA-2876</strain>
    </source>
</reference>
<reference key="2">
    <citation type="journal article" date="2007" name="Genome Biol.">
        <title>Assembly of the Candida albicans genome into sixteen supercontigs aligned on the eight chromosomes.</title>
        <authorList>
            <person name="van het Hoog M."/>
            <person name="Rast T.J."/>
            <person name="Martchenko M."/>
            <person name="Grindle S."/>
            <person name="Dignard D."/>
            <person name="Hogues H."/>
            <person name="Cuomo C."/>
            <person name="Berriman M."/>
            <person name="Scherer S."/>
            <person name="Magee B.B."/>
            <person name="Whiteway M."/>
            <person name="Chibana H."/>
            <person name="Nantel A."/>
            <person name="Magee P.T."/>
        </authorList>
    </citation>
    <scope>GENOME REANNOTATION</scope>
    <source>
        <strain>SC5314 / ATCC MYA-2876</strain>
    </source>
</reference>
<reference key="3">
    <citation type="journal article" date="2013" name="Genome Biol.">
        <title>Assembly of a phased diploid Candida albicans genome facilitates allele-specific measurements and provides a simple model for repeat and indel structure.</title>
        <authorList>
            <person name="Muzzey D."/>
            <person name="Schwartz K."/>
            <person name="Weissman J.S."/>
            <person name="Sherlock G."/>
        </authorList>
    </citation>
    <scope>NUCLEOTIDE SEQUENCE [LARGE SCALE GENOMIC DNA]</scope>
    <scope>GENOME REANNOTATION</scope>
    <source>
        <strain>SC5314 / ATCC MYA-2876</strain>
    </source>
</reference>
<reference key="4">
    <citation type="journal article" date="2003" name="Yeast">
        <title>Genome-wide identification of fungal GPI proteins.</title>
        <authorList>
            <person name="De Groot P.W."/>
            <person name="Hellingwerf K.J."/>
            <person name="Klis F.M."/>
        </authorList>
    </citation>
    <scope>PREDICTION OF GPI-ANCHOR</scope>
</reference>
<reference key="5">
    <citation type="journal article" date="2005" name="Antimicrob. Agents Chemother.">
        <title>Genome-wide expression profiling of the response to azole, polyene, echinocandin, and pyrimidine antifungal agents in Candida albicans.</title>
        <authorList>
            <person name="Liu T.T."/>
            <person name="Lee R.E."/>
            <person name="Barker K.S."/>
            <person name="Lee R.E."/>
            <person name="Wei L."/>
            <person name="Homayouni R."/>
            <person name="Rogers P.D."/>
        </authorList>
    </citation>
    <scope>INDUCTION</scope>
</reference>
<reference key="6">
    <citation type="journal article" date="2005" name="Mol. Biol. Cell">
        <title>Global roles of Ssn6 in Tup1- and Nrg1-dependent gene regulation in the fungal pathogen, Candida albicans.</title>
        <authorList>
            <person name="Garcia-Sanchez S."/>
            <person name="Mavor A.L."/>
            <person name="Russell C.L."/>
            <person name="Argimon S."/>
            <person name="Dennison P."/>
            <person name="Enjalbert B."/>
            <person name="Brown A.J."/>
        </authorList>
    </citation>
    <scope>INDUCTION</scope>
</reference>
<reference key="7">
    <citation type="journal article" date="2005" name="Mol. Microbiol.">
        <title>The moonlighting protein Tsa1p is implicated in oxidative stress response and in cell wall biogenesis in Candida albicans.</title>
        <authorList>
            <person name="Urban C."/>
            <person name="Xiong X."/>
            <person name="Sohn K."/>
            <person name="Schroppel K."/>
            <person name="Brunner H."/>
            <person name="Rupp S."/>
        </authorList>
    </citation>
    <scope>INDUCTION</scope>
</reference>
<reference key="8">
    <citation type="journal article" date="2006" name="Fungal Genet. Biol.">
        <title>Genomic response programs of Candida albicans following protoplasting and regeneration.</title>
        <authorList>
            <person name="Castillo L."/>
            <person name="Martinez A.I."/>
            <person name="Garcera A."/>
            <person name="Garcia-Martinez J."/>
            <person name="Ruiz-Herrera J."/>
            <person name="Valentin E."/>
            <person name="Sentandreu R."/>
        </authorList>
    </citation>
    <scope>INDUCTION</scope>
</reference>
<reference key="9">
    <citation type="journal article" date="2008" name="Mol. Biol. Cell">
        <title>Regulation of the Candida albicans cell wall damage response by transcription factor Sko1 and PAS kinase Psk1.</title>
        <authorList>
            <person name="Rauceo J.M."/>
            <person name="Blankenship J.R."/>
            <person name="Fanning S."/>
            <person name="Hamaker J.J."/>
            <person name="Deneault J.S."/>
            <person name="Smith F.J."/>
            <person name="Nantel A."/>
            <person name="Mitchell A.P."/>
        </authorList>
    </citation>
    <scope>INDUCTION</scope>
</reference>
<reference key="10">
    <citation type="journal article" date="2012" name="Fungal Genet. Biol.">
        <title>Pga13 in Candida albicans is localized in the cell wall and influences cell surface properties, morphogenesis and virulence.</title>
        <authorList>
            <person name="Gelis S."/>
            <person name="de Groot P.W."/>
            <person name="Castillo L."/>
            <person name="Moragues M.D."/>
            <person name="Sentandreu R."/>
            <person name="Gomez M.M."/>
            <person name="Valentin E."/>
        </authorList>
    </citation>
    <scope>FUNCTION</scope>
    <scope>SUBCELLULAR LOCATION</scope>
    <scope>DISRUPTION PHENOTYPE</scope>
</reference>
<reference key="11">
    <citation type="journal article" date="2013" name="Int. J. Med. Microbiol.">
        <title>The P-type ATPase Spf1 is required for endoplasmic reticulum functions and cell wall integrity in Candida albicans.</title>
        <authorList>
            <person name="Yu Q."/>
            <person name="Ding X."/>
            <person name="Zhang B."/>
            <person name="Xu N."/>
            <person name="Cheng X."/>
            <person name="Qian K."/>
            <person name="Zhang B."/>
            <person name="Xing L."/>
            <person name="Li M."/>
        </authorList>
    </citation>
    <scope>INDUCTION</scope>
</reference>
<reference key="12">
    <citation type="journal article" date="2013" name="PLoS ONE">
        <title>Global transcriptome sequencing identifies chlamydospore specific markers in Candida albicans and Candida dubliniensis.</title>
        <authorList>
            <person name="Palige K."/>
            <person name="Linde J."/>
            <person name="Martin R."/>
            <person name="Bottcher B."/>
            <person name="Citiulo F."/>
            <person name="Sullivan D.J."/>
            <person name="Weber J."/>
            <person name="Staib C."/>
            <person name="Rupp S."/>
            <person name="Hube B."/>
            <person name="Morschhauser J."/>
            <person name="Staib P."/>
        </authorList>
    </citation>
    <scope>INDUCTION</scope>
</reference>
<protein>
    <recommendedName>
        <fullName>GPI-anchored protein 13</fullName>
    </recommendedName>
</protein>
<organism>
    <name type="scientific">Candida albicans (strain SC5314 / ATCC MYA-2876)</name>
    <name type="common">Yeast</name>
    <dbReference type="NCBI Taxonomy" id="237561"/>
    <lineage>
        <taxon>Eukaryota</taxon>
        <taxon>Fungi</taxon>
        <taxon>Dikarya</taxon>
        <taxon>Ascomycota</taxon>
        <taxon>Saccharomycotina</taxon>
        <taxon>Pichiomycetes</taxon>
        <taxon>Debaryomycetaceae</taxon>
        <taxon>Candida/Lodderomyces clade</taxon>
        <taxon>Candida</taxon>
    </lineage>
</organism>
<accession>Q5A343</accession>
<accession>A0A1D8PTT1</accession>
<name>PGA13_CANAL</name>
<gene>
    <name type="primary">PGA13</name>
    <name type="ordered locus">CAALFM_CR08510WA</name>
    <name type="ORF">CaO19.13778</name>
    <name type="ORF">CaO19.6420</name>
</gene>